<comment type="function">
    <text evidence="1">Part of the Sec protein translocase complex. Interacts with the SecYEG preprotein conducting channel. SecDF uses the proton motive force (PMF) to complete protein translocation after the ATP-dependent function of SecA.</text>
</comment>
<comment type="subunit">
    <text evidence="1">Forms a complex with SecF. Part of the essential Sec protein translocation apparatus which comprises SecA, SecYEG and auxiliary proteins SecDF-YajC and YidC.</text>
</comment>
<comment type="subcellular location">
    <subcellularLocation>
        <location evidence="1">Cell inner membrane</location>
        <topology evidence="1">Multi-pass membrane protein</topology>
    </subcellularLocation>
</comment>
<comment type="similarity">
    <text evidence="1">Belongs to the SecD/SecF family. SecD subfamily.</text>
</comment>
<keyword id="KW-0997">Cell inner membrane</keyword>
<keyword id="KW-1003">Cell membrane</keyword>
<keyword id="KW-0472">Membrane</keyword>
<keyword id="KW-0653">Protein transport</keyword>
<keyword id="KW-1185">Reference proteome</keyword>
<keyword id="KW-0811">Translocation</keyword>
<keyword id="KW-0812">Transmembrane</keyword>
<keyword id="KW-1133">Transmembrane helix</keyword>
<keyword id="KW-0813">Transport</keyword>
<evidence type="ECO:0000255" key="1">
    <source>
        <dbReference type="HAMAP-Rule" id="MF_01463"/>
    </source>
</evidence>
<gene>
    <name evidence="1" type="primary">secD</name>
    <name type="ordered locus">RP586</name>
</gene>
<dbReference type="EMBL" id="AJ235272">
    <property type="protein sequence ID" value="CAA15031.1"/>
    <property type="molecule type" value="Genomic_DNA"/>
</dbReference>
<dbReference type="PIR" id="E71663">
    <property type="entry name" value="E71663"/>
</dbReference>
<dbReference type="RefSeq" id="NP_220955.1">
    <property type="nucleotide sequence ID" value="NC_000963.1"/>
</dbReference>
<dbReference type="RefSeq" id="WP_004597905.1">
    <property type="nucleotide sequence ID" value="NC_000963.1"/>
</dbReference>
<dbReference type="SMR" id="Q9ZCW8"/>
<dbReference type="STRING" id="272947.gene:17555666"/>
<dbReference type="EnsemblBacteria" id="CAA15031">
    <property type="protein sequence ID" value="CAA15031"/>
    <property type="gene ID" value="CAA15031"/>
</dbReference>
<dbReference type="GeneID" id="57569712"/>
<dbReference type="KEGG" id="rpr:RP586"/>
<dbReference type="PATRIC" id="fig|272947.5.peg.602"/>
<dbReference type="eggNOG" id="COG0342">
    <property type="taxonomic scope" value="Bacteria"/>
</dbReference>
<dbReference type="HOGENOM" id="CLU_007894_4_3_5"/>
<dbReference type="OrthoDB" id="9805019at2"/>
<dbReference type="Proteomes" id="UP000002480">
    <property type="component" value="Chromosome"/>
</dbReference>
<dbReference type="GO" id="GO:0005886">
    <property type="term" value="C:plasma membrane"/>
    <property type="evidence" value="ECO:0007669"/>
    <property type="project" value="UniProtKB-SubCell"/>
</dbReference>
<dbReference type="GO" id="GO:0015450">
    <property type="term" value="F:protein-transporting ATPase activity"/>
    <property type="evidence" value="ECO:0007669"/>
    <property type="project" value="InterPro"/>
</dbReference>
<dbReference type="GO" id="GO:0065002">
    <property type="term" value="P:intracellular protein transmembrane transport"/>
    <property type="evidence" value="ECO:0007669"/>
    <property type="project" value="UniProtKB-UniRule"/>
</dbReference>
<dbReference type="GO" id="GO:0006605">
    <property type="term" value="P:protein targeting"/>
    <property type="evidence" value="ECO:0007669"/>
    <property type="project" value="UniProtKB-UniRule"/>
</dbReference>
<dbReference type="GO" id="GO:0043952">
    <property type="term" value="P:protein transport by the Sec complex"/>
    <property type="evidence" value="ECO:0007669"/>
    <property type="project" value="UniProtKB-UniRule"/>
</dbReference>
<dbReference type="FunFam" id="3.30.1360.200:FF:000002">
    <property type="entry name" value="Preprotein translocase subunit SecD"/>
    <property type="match status" value="1"/>
</dbReference>
<dbReference type="FunFam" id="1.20.1640.10:FF:000004">
    <property type="entry name" value="Protein translocase subunit SecD"/>
    <property type="match status" value="1"/>
</dbReference>
<dbReference type="Gene3D" id="3.30.1360.200">
    <property type="match status" value="1"/>
</dbReference>
<dbReference type="Gene3D" id="3.30.70.3400">
    <property type="match status" value="2"/>
</dbReference>
<dbReference type="Gene3D" id="1.20.1640.10">
    <property type="entry name" value="Multidrug efflux transporter AcrB transmembrane domain"/>
    <property type="match status" value="1"/>
</dbReference>
<dbReference type="HAMAP" id="MF_01463_B">
    <property type="entry name" value="SecD_B"/>
    <property type="match status" value="1"/>
</dbReference>
<dbReference type="InterPro" id="IPR005791">
    <property type="entry name" value="SecD"/>
</dbReference>
<dbReference type="InterPro" id="IPR022813">
    <property type="entry name" value="SecD/SecF_arch_bac"/>
</dbReference>
<dbReference type="InterPro" id="IPR048631">
    <property type="entry name" value="SecD_1st"/>
</dbReference>
<dbReference type="InterPro" id="IPR048634">
    <property type="entry name" value="SecD_SecF_C"/>
</dbReference>
<dbReference type="InterPro" id="IPR055344">
    <property type="entry name" value="SecD_SecF_C_bact"/>
</dbReference>
<dbReference type="InterPro" id="IPR054384">
    <property type="entry name" value="SecDF_P1_head"/>
</dbReference>
<dbReference type="NCBIfam" id="TIGR00916">
    <property type="entry name" value="2A0604s01"/>
    <property type="match status" value="1"/>
</dbReference>
<dbReference type="NCBIfam" id="TIGR01129">
    <property type="entry name" value="secD"/>
    <property type="match status" value="1"/>
</dbReference>
<dbReference type="PANTHER" id="PTHR30081:SF1">
    <property type="entry name" value="PROTEIN TRANSLOCASE SUBUNIT SECD"/>
    <property type="match status" value="1"/>
</dbReference>
<dbReference type="PANTHER" id="PTHR30081">
    <property type="entry name" value="PROTEIN-EXPORT MEMBRANE PROTEIN SEC"/>
    <property type="match status" value="1"/>
</dbReference>
<dbReference type="Pfam" id="PF21760">
    <property type="entry name" value="SecD_1st"/>
    <property type="match status" value="1"/>
</dbReference>
<dbReference type="Pfam" id="PF02355">
    <property type="entry name" value="SecD_SecF_C"/>
    <property type="match status" value="1"/>
</dbReference>
<dbReference type="Pfam" id="PF22599">
    <property type="entry name" value="SecDF_P1_head"/>
    <property type="match status" value="1"/>
</dbReference>
<dbReference type="SUPFAM" id="SSF82866">
    <property type="entry name" value="Multidrug efflux transporter AcrB transmembrane domain"/>
    <property type="match status" value="1"/>
</dbReference>
<feature type="chain" id="PRO_0000095968" description="Protein translocase subunit SecD">
    <location>
        <begin position="1"/>
        <end position="518"/>
    </location>
</feature>
<feature type="transmembrane region" description="Helical" evidence="1">
    <location>
        <begin position="9"/>
        <end position="29"/>
    </location>
</feature>
<feature type="transmembrane region" description="Helical" evidence="1">
    <location>
        <begin position="356"/>
        <end position="376"/>
    </location>
</feature>
<feature type="transmembrane region" description="Helical" evidence="1">
    <location>
        <begin position="377"/>
        <end position="397"/>
    </location>
</feature>
<feature type="transmembrane region" description="Helical" evidence="1">
    <location>
        <begin position="406"/>
        <end position="426"/>
    </location>
</feature>
<feature type="transmembrane region" description="Helical" evidence="1">
    <location>
        <begin position="463"/>
        <end position="483"/>
    </location>
</feature>
<feature type="transmembrane region" description="Helical" evidence="1">
    <location>
        <begin position="486"/>
        <end position="506"/>
    </location>
</feature>
<organism>
    <name type="scientific">Rickettsia prowazekii (strain Madrid E)</name>
    <dbReference type="NCBI Taxonomy" id="272947"/>
    <lineage>
        <taxon>Bacteria</taxon>
        <taxon>Pseudomonadati</taxon>
        <taxon>Pseudomonadota</taxon>
        <taxon>Alphaproteobacteria</taxon>
        <taxon>Rickettsiales</taxon>
        <taxon>Rickettsiaceae</taxon>
        <taxon>Rickettsieae</taxon>
        <taxon>Rickettsia</taxon>
        <taxon>typhus group</taxon>
    </lineage>
</organism>
<protein>
    <recommendedName>
        <fullName evidence="1">Protein translocase subunit SecD</fullName>
    </recommendedName>
</protein>
<accession>Q9ZCW8</accession>
<proteinExistence type="inferred from homology"/>
<name>SECD_RICPR</name>
<reference key="1">
    <citation type="journal article" date="1998" name="Nature">
        <title>The genome sequence of Rickettsia prowazekii and the origin of mitochondria.</title>
        <authorList>
            <person name="Andersson S.G.E."/>
            <person name="Zomorodipour A."/>
            <person name="Andersson J.O."/>
            <person name="Sicheritz-Ponten T."/>
            <person name="Alsmark U.C.M."/>
            <person name="Podowski R.M."/>
            <person name="Naeslund A.K."/>
            <person name="Eriksson A.-S."/>
            <person name="Winkler H.H."/>
            <person name="Kurland C.G."/>
        </authorList>
    </citation>
    <scope>NUCLEOTIDE SEQUENCE [LARGE SCALE GENOMIC DNA]</scope>
    <source>
        <strain>Madrid E</strain>
    </source>
</reference>
<sequence length="518" mass="56712">MQNLPKWKIVLSIICTVFAIICALPNFIQINSKFLPHDSINLGLDLRGGANLLLDVDFDTYLNDSMENLADTLRKNLRKHKIGYKNLLVRHNNIQLEVRSPEVLKSLKKIINKIDPEIIIGVNKNKIKLRYSESRFNDLLNKVVEQSIEIVRMRVDSTGTKEPTLQRQGNKHILLQVPGSENPSYLKNILGKTAKLTFHLVDENANIEDAIKGHVPLGSMLIKGDSKHHGEYYIVIKKKVLLSGAHLTKASASFDQNSQPIVAFSFNNLGSKIFGEITKNNTGKRLAIVLDNKLLSAPIINGAIIGGNGIITGNFTIESANELALLLRVGSLPTPLKIIEERSIGPNLGADSIESGKKAGLIGFVAVCIFMILSYGVIGLFANIALILALLYILALLSLFQATLTLPGIAGIILTIGMAVDANVLIYERIKEELHKGVSNLYAIRTGFESAFATIIDSNITTLIVAFALYIFGVGAIKGFAVALTIGIISSMFSAIIITKLLIDVWVKYFKPKKLGLL</sequence>